<feature type="chain" id="PRO_1000069893" description="D-erythrose-4-phosphate dehydrogenase">
    <location>
        <begin position="1"/>
        <end position="339"/>
    </location>
</feature>
<feature type="active site" description="Nucleophile" evidence="1">
    <location>
        <position position="155"/>
    </location>
</feature>
<feature type="binding site" evidence="1">
    <location>
        <begin position="12"/>
        <end position="13"/>
    </location>
    <ligand>
        <name>NAD(+)</name>
        <dbReference type="ChEBI" id="CHEBI:57540"/>
    </ligand>
</feature>
<feature type="binding site" evidence="1">
    <location>
        <position position="81"/>
    </location>
    <ligand>
        <name>NAD(+)</name>
        <dbReference type="ChEBI" id="CHEBI:57540"/>
    </ligand>
</feature>
<feature type="binding site" evidence="1">
    <location>
        <begin position="154"/>
        <end position="156"/>
    </location>
    <ligand>
        <name>substrate</name>
    </ligand>
</feature>
<feature type="binding site" evidence="1">
    <location>
        <position position="200"/>
    </location>
    <ligand>
        <name>substrate</name>
    </ligand>
</feature>
<feature type="binding site" evidence="1">
    <location>
        <begin position="213"/>
        <end position="214"/>
    </location>
    <ligand>
        <name>substrate</name>
    </ligand>
</feature>
<feature type="binding site" evidence="1">
    <location>
        <position position="236"/>
    </location>
    <ligand>
        <name>substrate</name>
    </ligand>
</feature>
<feature type="binding site" evidence="1">
    <location>
        <position position="318"/>
    </location>
    <ligand>
        <name>NAD(+)</name>
        <dbReference type="ChEBI" id="CHEBI:57540"/>
    </ligand>
</feature>
<feature type="site" description="Activates thiol group during catalysis" evidence="1">
    <location>
        <position position="182"/>
    </location>
</feature>
<accession>A8A467</accession>
<reference key="1">
    <citation type="journal article" date="2008" name="J. Bacteriol.">
        <title>The pangenome structure of Escherichia coli: comparative genomic analysis of E. coli commensal and pathogenic isolates.</title>
        <authorList>
            <person name="Rasko D.A."/>
            <person name="Rosovitz M.J."/>
            <person name="Myers G.S.A."/>
            <person name="Mongodin E.F."/>
            <person name="Fricke W.F."/>
            <person name="Gajer P."/>
            <person name="Crabtree J."/>
            <person name="Sebaihia M."/>
            <person name="Thomson N.R."/>
            <person name="Chaudhuri R."/>
            <person name="Henderson I.R."/>
            <person name="Sperandio V."/>
            <person name="Ravel J."/>
        </authorList>
    </citation>
    <scope>NUCLEOTIDE SEQUENCE [LARGE SCALE GENOMIC DNA]</scope>
    <source>
        <strain>HS</strain>
    </source>
</reference>
<gene>
    <name evidence="1" type="primary">epd</name>
    <name type="ordered locus">EcHS_A3085</name>
</gene>
<sequence>MTVRVAINGFGRIGRNVVRALYESGRRAEITVVAINELADAAGMAHLLKYDTSHGRFAWEVRQERDQLFVGDDAIRVLHERSLQSLPWRELGVDVVLDCTGVYGSREHGEAHIAAGAKKVLFSHPGSNDLDATVVYGVNQDQLRAEHRIVSNASCTTNCIIPVIKLLDDAYGIESGTVTTIHSAMHDQQVIDAYHPDLRRTRAASQSIIPVDTKLAAGITRFFPQFNDRFEAIAVRVPTINVTAIDLSVTVKKPVKANEVNLLLQKAAQGAFHGIVDYTELPLVSVDFNHDPHSAIVDGTQTRVSGAHLIKTLVWCDNEWGFANRMLDTTLAMATVAFR</sequence>
<comment type="function">
    <text evidence="1">Catalyzes the NAD-dependent conversion of D-erythrose 4-phosphate to 4-phosphoerythronate.</text>
</comment>
<comment type="catalytic activity">
    <reaction evidence="1">
        <text>D-erythrose 4-phosphate + NAD(+) + H2O = 4-phospho-D-erythronate + NADH + 2 H(+)</text>
        <dbReference type="Rhea" id="RHEA:12056"/>
        <dbReference type="ChEBI" id="CHEBI:15377"/>
        <dbReference type="ChEBI" id="CHEBI:15378"/>
        <dbReference type="ChEBI" id="CHEBI:16897"/>
        <dbReference type="ChEBI" id="CHEBI:57540"/>
        <dbReference type="ChEBI" id="CHEBI:57945"/>
        <dbReference type="ChEBI" id="CHEBI:58766"/>
        <dbReference type="EC" id="1.2.1.72"/>
    </reaction>
</comment>
<comment type="pathway">
    <text evidence="1">Cofactor biosynthesis; pyridoxine 5'-phosphate biosynthesis; pyridoxine 5'-phosphate from D-erythrose 4-phosphate: step 1/5.</text>
</comment>
<comment type="subunit">
    <text evidence="1">Homotetramer.</text>
</comment>
<comment type="subcellular location">
    <subcellularLocation>
        <location evidence="1">Cytoplasm</location>
    </subcellularLocation>
</comment>
<comment type="similarity">
    <text evidence="1">Belongs to the glyceraldehyde-3-phosphate dehydrogenase family. Epd subfamily.</text>
</comment>
<organism>
    <name type="scientific">Escherichia coli O9:H4 (strain HS)</name>
    <dbReference type="NCBI Taxonomy" id="331112"/>
    <lineage>
        <taxon>Bacteria</taxon>
        <taxon>Pseudomonadati</taxon>
        <taxon>Pseudomonadota</taxon>
        <taxon>Gammaproteobacteria</taxon>
        <taxon>Enterobacterales</taxon>
        <taxon>Enterobacteriaceae</taxon>
        <taxon>Escherichia</taxon>
    </lineage>
</organism>
<keyword id="KW-0963">Cytoplasm</keyword>
<keyword id="KW-0520">NAD</keyword>
<keyword id="KW-0560">Oxidoreductase</keyword>
<keyword id="KW-0664">Pyridoxine biosynthesis</keyword>
<proteinExistence type="inferred from homology"/>
<evidence type="ECO:0000255" key="1">
    <source>
        <dbReference type="HAMAP-Rule" id="MF_01640"/>
    </source>
</evidence>
<name>E4PD_ECOHS</name>
<dbReference type="EC" id="1.2.1.72" evidence="1"/>
<dbReference type="EMBL" id="CP000802">
    <property type="protein sequence ID" value="ABV07321.1"/>
    <property type="molecule type" value="Genomic_DNA"/>
</dbReference>
<dbReference type="RefSeq" id="WP_000218480.1">
    <property type="nucleotide sequence ID" value="NC_009800.1"/>
</dbReference>
<dbReference type="SMR" id="A8A467"/>
<dbReference type="GeneID" id="93779071"/>
<dbReference type="KEGG" id="ecx:EcHS_A3085"/>
<dbReference type="HOGENOM" id="CLU_030140_0_2_6"/>
<dbReference type="UniPathway" id="UPA00244">
    <property type="reaction ID" value="UER00309"/>
</dbReference>
<dbReference type="GO" id="GO:0005737">
    <property type="term" value="C:cytoplasm"/>
    <property type="evidence" value="ECO:0007669"/>
    <property type="project" value="UniProtKB-SubCell"/>
</dbReference>
<dbReference type="GO" id="GO:0048001">
    <property type="term" value="F:erythrose-4-phosphate dehydrogenase activity"/>
    <property type="evidence" value="ECO:0007669"/>
    <property type="project" value="UniProtKB-UniRule"/>
</dbReference>
<dbReference type="GO" id="GO:0051287">
    <property type="term" value="F:NAD binding"/>
    <property type="evidence" value="ECO:0007669"/>
    <property type="project" value="InterPro"/>
</dbReference>
<dbReference type="GO" id="GO:0042823">
    <property type="term" value="P:pyridoxal phosphate biosynthetic process"/>
    <property type="evidence" value="ECO:0007669"/>
    <property type="project" value="UniProtKB-UniRule"/>
</dbReference>
<dbReference type="GO" id="GO:0008615">
    <property type="term" value="P:pyridoxine biosynthetic process"/>
    <property type="evidence" value="ECO:0007669"/>
    <property type="project" value="UniProtKB-UniRule"/>
</dbReference>
<dbReference type="CDD" id="cd23937">
    <property type="entry name" value="GAPDH_C_E4PDH"/>
    <property type="match status" value="1"/>
</dbReference>
<dbReference type="CDD" id="cd17892">
    <property type="entry name" value="GAPDH_N_E4PDH"/>
    <property type="match status" value="1"/>
</dbReference>
<dbReference type="FunFam" id="3.30.360.10:FF:000007">
    <property type="entry name" value="D-erythrose-4-phosphate dehydrogenase"/>
    <property type="match status" value="1"/>
</dbReference>
<dbReference type="FunFam" id="3.40.50.720:FF:000001">
    <property type="entry name" value="Glyceraldehyde-3-phosphate dehydrogenase"/>
    <property type="match status" value="1"/>
</dbReference>
<dbReference type="Gene3D" id="3.30.360.10">
    <property type="entry name" value="Dihydrodipicolinate Reductase, domain 2"/>
    <property type="match status" value="1"/>
</dbReference>
<dbReference type="Gene3D" id="3.40.50.720">
    <property type="entry name" value="NAD(P)-binding Rossmann-like Domain"/>
    <property type="match status" value="1"/>
</dbReference>
<dbReference type="HAMAP" id="MF_01640">
    <property type="entry name" value="E4P_dehydrog"/>
    <property type="match status" value="1"/>
</dbReference>
<dbReference type="InterPro" id="IPR006422">
    <property type="entry name" value="E4P_DH_bac"/>
</dbReference>
<dbReference type="InterPro" id="IPR020831">
    <property type="entry name" value="GlycerAld/Erythrose_P_DH"/>
</dbReference>
<dbReference type="InterPro" id="IPR020830">
    <property type="entry name" value="GlycerAld_3-P_DH_AS"/>
</dbReference>
<dbReference type="InterPro" id="IPR020829">
    <property type="entry name" value="GlycerAld_3-P_DH_cat"/>
</dbReference>
<dbReference type="InterPro" id="IPR020828">
    <property type="entry name" value="GlycerAld_3-P_DH_NAD(P)-bd"/>
</dbReference>
<dbReference type="InterPro" id="IPR036291">
    <property type="entry name" value="NAD(P)-bd_dom_sf"/>
</dbReference>
<dbReference type="NCBIfam" id="TIGR01532">
    <property type="entry name" value="E4PD_g-proteo"/>
    <property type="match status" value="1"/>
</dbReference>
<dbReference type="NCBIfam" id="NF010058">
    <property type="entry name" value="PRK13535.1"/>
    <property type="match status" value="1"/>
</dbReference>
<dbReference type="PANTHER" id="PTHR43148">
    <property type="entry name" value="GLYCERALDEHYDE-3-PHOSPHATE DEHYDROGENASE 2"/>
    <property type="match status" value="1"/>
</dbReference>
<dbReference type="Pfam" id="PF02800">
    <property type="entry name" value="Gp_dh_C"/>
    <property type="match status" value="1"/>
</dbReference>
<dbReference type="Pfam" id="PF00044">
    <property type="entry name" value="Gp_dh_N"/>
    <property type="match status" value="1"/>
</dbReference>
<dbReference type="PIRSF" id="PIRSF000149">
    <property type="entry name" value="GAP_DH"/>
    <property type="match status" value="1"/>
</dbReference>
<dbReference type="PRINTS" id="PR00078">
    <property type="entry name" value="G3PDHDRGNASE"/>
</dbReference>
<dbReference type="SMART" id="SM00846">
    <property type="entry name" value="Gp_dh_N"/>
    <property type="match status" value="1"/>
</dbReference>
<dbReference type="SUPFAM" id="SSF55347">
    <property type="entry name" value="Glyceraldehyde-3-phosphate dehydrogenase-like, C-terminal domain"/>
    <property type="match status" value="1"/>
</dbReference>
<dbReference type="SUPFAM" id="SSF51735">
    <property type="entry name" value="NAD(P)-binding Rossmann-fold domains"/>
    <property type="match status" value="1"/>
</dbReference>
<dbReference type="PROSITE" id="PS00071">
    <property type="entry name" value="GAPDH"/>
    <property type="match status" value="1"/>
</dbReference>
<protein>
    <recommendedName>
        <fullName evidence="1">D-erythrose-4-phosphate dehydrogenase</fullName>
        <shortName evidence="1">E4PDH</shortName>
        <ecNumber evidence="1">1.2.1.72</ecNumber>
    </recommendedName>
</protein>